<proteinExistence type="inferred from homology"/>
<keyword id="KW-0227">DNA damage</keyword>
<keyword id="KW-0234">DNA repair</keyword>
<keyword id="KW-0238">DNA-binding</keyword>
<keyword id="KW-0326">Glycosidase</keyword>
<keyword id="KW-0378">Hydrolase</keyword>
<keyword id="KW-0456">Lyase</keyword>
<keyword id="KW-0479">Metal-binding</keyword>
<keyword id="KW-0511">Multifunctional enzyme</keyword>
<keyword id="KW-1185">Reference proteome</keyword>
<keyword id="KW-0862">Zinc</keyword>
<keyword id="KW-0863">Zinc-finger</keyword>
<reference key="1">
    <citation type="journal article" date="2006" name="Appl. Environ. Microbiol.">
        <title>Complete genome sequence of the marine, chemolithoautotrophic, ammonia-oxidizing bacterium Nitrosococcus oceani ATCC 19707.</title>
        <authorList>
            <person name="Klotz M.G."/>
            <person name="Arp D.J."/>
            <person name="Chain P.S.G."/>
            <person name="El-Sheikh A.F."/>
            <person name="Hauser L.J."/>
            <person name="Hommes N.G."/>
            <person name="Larimer F.W."/>
            <person name="Malfatti S.A."/>
            <person name="Norton J.M."/>
            <person name="Poret-Peterson A.T."/>
            <person name="Vergez L.M."/>
            <person name="Ward B.B."/>
        </authorList>
    </citation>
    <scope>NUCLEOTIDE SEQUENCE [LARGE SCALE GENOMIC DNA]</scope>
    <source>
        <strain>ATCC 19707 / BCRC 17464 / JCM 30415 / NCIMB 11848 / C-107</strain>
    </source>
</reference>
<dbReference type="EC" id="3.2.2.23" evidence="2"/>
<dbReference type="EC" id="4.2.99.18" evidence="2"/>
<dbReference type="EMBL" id="CP000127">
    <property type="protein sequence ID" value="ABA59101.1"/>
    <property type="molecule type" value="Genomic_DNA"/>
</dbReference>
<dbReference type="RefSeq" id="WP_002813868.1">
    <property type="nucleotide sequence ID" value="NC_007484.1"/>
</dbReference>
<dbReference type="SMR" id="Q3J7U5"/>
<dbReference type="FunCoup" id="Q3J7U5">
    <property type="interactions" value="468"/>
</dbReference>
<dbReference type="STRING" id="323261.Noc_2648"/>
<dbReference type="KEGG" id="noc:Noc_2648"/>
<dbReference type="eggNOG" id="COG0266">
    <property type="taxonomic scope" value="Bacteria"/>
</dbReference>
<dbReference type="HOGENOM" id="CLU_038423_1_1_6"/>
<dbReference type="InParanoid" id="Q3J7U5"/>
<dbReference type="Proteomes" id="UP000006838">
    <property type="component" value="Chromosome"/>
</dbReference>
<dbReference type="GO" id="GO:0034039">
    <property type="term" value="F:8-oxo-7,8-dihydroguanine DNA N-glycosylase activity"/>
    <property type="evidence" value="ECO:0007669"/>
    <property type="project" value="TreeGrafter"/>
</dbReference>
<dbReference type="GO" id="GO:0140078">
    <property type="term" value="F:class I DNA-(apurinic or apyrimidinic site) endonuclease activity"/>
    <property type="evidence" value="ECO:0007669"/>
    <property type="project" value="UniProtKB-EC"/>
</dbReference>
<dbReference type="GO" id="GO:0003684">
    <property type="term" value="F:damaged DNA binding"/>
    <property type="evidence" value="ECO:0007669"/>
    <property type="project" value="InterPro"/>
</dbReference>
<dbReference type="GO" id="GO:0008270">
    <property type="term" value="F:zinc ion binding"/>
    <property type="evidence" value="ECO:0007669"/>
    <property type="project" value="UniProtKB-UniRule"/>
</dbReference>
<dbReference type="GO" id="GO:0006284">
    <property type="term" value="P:base-excision repair"/>
    <property type="evidence" value="ECO:0007669"/>
    <property type="project" value="InterPro"/>
</dbReference>
<dbReference type="CDD" id="cd08966">
    <property type="entry name" value="EcFpg-like_N"/>
    <property type="match status" value="1"/>
</dbReference>
<dbReference type="FunFam" id="1.10.8.50:FF:000003">
    <property type="entry name" value="Formamidopyrimidine-DNA glycosylase"/>
    <property type="match status" value="1"/>
</dbReference>
<dbReference type="FunFam" id="3.20.190.10:FF:000001">
    <property type="entry name" value="Formamidopyrimidine-DNA glycosylase"/>
    <property type="match status" value="1"/>
</dbReference>
<dbReference type="Gene3D" id="1.10.8.50">
    <property type="match status" value="1"/>
</dbReference>
<dbReference type="Gene3D" id="3.20.190.10">
    <property type="entry name" value="MutM-like, N-terminal"/>
    <property type="match status" value="1"/>
</dbReference>
<dbReference type="HAMAP" id="MF_00103">
    <property type="entry name" value="Fapy_DNA_glycosyl"/>
    <property type="match status" value="1"/>
</dbReference>
<dbReference type="InterPro" id="IPR015886">
    <property type="entry name" value="DNA_glyclase/AP_lyase_DNA-bd"/>
</dbReference>
<dbReference type="InterPro" id="IPR015887">
    <property type="entry name" value="DNA_glyclase_Znf_dom_DNA_BS"/>
</dbReference>
<dbReference type="InterPro" id="IPR020629">
    <property type="entry name" value="Formamido-pyr_DNA_Glyclase"/>
</dbReference>
<dbReference type="InterPro" id="IPR012319">
    <property type="entry name" value="FPG_cat"/>
</dbReference>
<dbReference type="InterPro" id="IPR035937">
    <property type="entry name" value="MutM-like_N-ter"/>
</dbReference>
<dbReference type="InterPro" id="IPR010979">
    <property type="entry name" value="Ribosomal_uS13-like_H2TH"/>
</dbReference>
<dbReference type="InterPro" id="IPR000214">
    <property type="entry name" value="Znf_DNA_glyclase/AP_lyase"/>
</dbReference>
<dbReference type="InterPro" id="IPR010663">
    <property type="entry name" value="Znf_FPG/IleRS"/>
</dbReference>
<dbReference type="NCBIfam" id="TIGR00577">
    <property type="entry name" value="fpg"/>
    <property type="match status" value="1"/>
</dbReference>
<dbReference type="NCBIfam" id="NF002211">
    <property type="entry name" value="PRK01103.1"/>
    <property type="match status" value="1"/>
</dbReference>
<dbReference type="PANTHER" id="PTHR22993">
    <property type="entry name" value="FORMAMIDOPYRIMIDINE-DNA GLYCOSYLASE"/>
    <property type="match status" value="1"/>
</dbReference>
<dbReference type="PANTHER" id="PTHR22993:SF9">
    <property type="entry name" value="FORMAMIDOPYRIMIDINE-DNA GLYCOSYLASE"/>
    <property type="match status" value="1"/>
</dbReference>
<dbReference type="Pfam" id="PF01149">
    <property type="entry name" value="Fapy_DNA_glyco"/>
    <property type="match status" value="1"/>
</dbReference>
<dbReference type="Pfam" id="PF06831">
    <property type="entry name" value="H2TH"/>
    <property type="match status" value="1"/>
</dbReference>
<dbReference type="Pfam" id="PF06827">
    <property type="entry name" value="zf-FPG_IleRS"/>
    <property type="match status" value="1"/>
</dbReference>
<dbReference type="SMART" id="SM00898">
    <property type="entry name" value="Fapy_DNA_glyco"/>
    <property type="match status" value="1"/>
</dbReference>
<dbReference type="SMART" id="SM01232">
    <property type="entry name" value="H2TH"/>
    <property type="match status" value="1"/>
</dbReference>
<dbReference type="SUPFAM" id="SSF57716">
    <property type="entry name" value="Glucocorticoid receptor-like (DNA-binding domain)"/>
    <property type="match status" value="1"/>
</dbReference>
<dbReference type="SUPFAM" id="SSF81624">
    <property type="entry name" value="N-terminal domain of MutM-like DNA repair proteins"/>
    <property type="match status" value="1"/>
</dbReference>
<dbReference type="SUPFAM" id="SSF46946">
    <property type="entry name" value="S13-like H2TH domain"/>
    <property type="match status" value="1"/>
</dbReference>
<dbReference type="PROSITE" id="PS51068">
    <property type="entry name" value="FPG_CAT"/>
    <property type="match status" value="1"/>
</dbReference>
<dbReference type="PROSITE" id="PS01242">
    <property type="entry name" value="ZF_FPG_1"/>
    <property type="match status" value="1"/>
</dbReference>
<dbReference type="PROSITE" id="PS51066">
    <property type="entry name" value="ZF_FPG_2"/>
    <property type="match status" value="1"/>
</dbReference>
<evidence type="ECO:0000250" key="1"/>
<evidence type="ECO:0000255" key="2">
    <source>
        <dbReference type="HAMAP-Rule" id="MF_00103"/>
    </source>
</evidence>
<comment type="function">
    <text evidence="2">Involved in base excision repair of DNA damaged by oxidation or by mutagenic agents. Acts as a DNA glycosylase that recognizes and removes damaged bases. Has a preference for oxidized purines, such as 7,8-dihydro-8-oxoguanine (8-oxoG). Has AP (apurinic/apyrimidinic) lyase activity and introduces nicks in the DNA strand. Cleaves the DNA backbone by beta-delta elimination to generate a single-strand break at the site of the removed base with both 3'- and 5'-phosphates.</text>
</comment>
<comment type="catalytic activity">
    <reaction evidence="2">
        <text>Hydrolysis of DNA containing ring-opened 7-methylguanine residues, releasing 2,6-diamino-4-hydroxy-5-(N-methyl)formamidopyrimidine.</text>
        <dbReference type="EC" id="3.2.2.23"/>
    </reaction>
</comment>
<comment type="catalytic activity">
    <reaction evidence="2">
        <text>2'-deoxyribonucleotide-(2'-deoxyribose 5'-phosphate)-2'-deoxyribonucleotide-DNA = a 3'-end 2'-deoxyribonucleotide-(2,3-dehydro-2,3-deoxyribose 5'-phosphate)-DNA + a 5'-end 5'-phospho-2'-deoxyribonucleoside-DNA + H(+)</text>
        <dbReference type="Rhea" id="RHEA:66592"/>
        <dbReference type="Rhea" id="RHEA-COMP:13180"/>
        <dbReference type="Rhea" id="RHEA-COMP:16897"/>
        <dbReference type="Rhea" id="RHEA-COMP:17067"/>
        <dbReference type="ChEBI" id="CHEBI:15378"/>
        <dbReference type="ChEBI" id="CHEBI:136412"/>
        <dbReference type="ChEBI" id="CHEBI:157695"/>
        <dbReference type="ChEBI" id="CHEBI:167181"/>
        <dbReference type="EC" id="4.2.99.18"/>
    </reaction>
</comment>
<comment type="cofactor">
    <cofactor evidence="2">
        <name>Zn(2+)</name>
        <dbReference type="ChEBI" id="CHEBI:29105"/>
    </cofactor>
    <text evidence="2">Binds 1 zinc ion per subunit.</text>
</comment>
<comment type="subunit">
    <text evidence="2">Monomer.</text>
</comment>
<comment type="similarity">
    <text evidence="2">Belongs to the FPG family.</text>
</comment>
<organism>
    <name type="scientific">Nitrosococcus oceani (strain ATCC 19707 / BCRC 17464 / JCM 30415 / NCIMB 11848 / C-107)</name>
    <dbReference type="NCBI Taxonomy" id="323261"/>
    <lineage>
        <taxon>Bacteria</taxon>
        <taxon>Pseudomonadati</taxon>
        <taxon>Pseudomonadota</taxon>
        <taxon>Gammaproteobacteria</taxon>
        <taxon>Chromatiales</taxon>
        <taxon>Chromatiaceae</taxon>
        <taxon>Nitrosococcus</taxon>
    </lineage>
</organism>
<feature type="initiator methionine" description="Removed" evidence="1">
    <location>
        <position position="1"/>
    </location>
</feature>
<feature type="chain" id="PRO_0000228452" description="Formamidopyrimidine-DNA glycosylase">
    <location>
        <begin position="2"/>
        <end position="271"/>
    </location>
</feature>
<feature type="zinc finger region" description="FPG-type" evidence="2">
    <location>
        <begin position="237"/>
        <end position="271"/>
    </location>
</feature>
<feature type="active site" description="Schiff-base intermediate with DNA" evidence="2">
    <location>
        <position position="2"/>
    </location>
</feature>
<feature type="active site" description="Proton donor" evidence="2">
    <location>
        <position position="3"/>
    </location>
</feature>
<feature type="active site" description="Proton donor; for beta-elimination activity" evidence="2">
    <location>
        <position position="58"/>
    </location>
</feature>
<feature type="active site" description="Proton donor; for delta-elimination activity" evidence="2">
    <location>
        <position position="261"/>
    </location>
</feature>
<feature type="binding site" evidence="2">
    <location>
        <position position="91"/>
    </location>
    <ligand>
        <name>DNA</name>
        <dbReference type="ChEBI" id="CHEBI:16991"/>
    </ligand>
</feature>
<feature type="binding site" evidence="2">
    <location>
        <position position="110"/>
    </location>
    <ligand>
        <name>DNA</name>
        <dbReference type="ChEBI" id="CHEBI:16991"/>
    </ligand>
</feature>
<feature type="binding site" evidence="2">
    <location>
        <position position="152"/>
    </location>
    <ligand>
        <name>DNA</name>
        <dbReference type="ChEBI" id="CHEBI:16991"/>
    </ligand>
</feature>
<sequence>MPELPEVETVRRGIEPHLVGRQIHTVIVRESRLRWPIPLSLTQNLIGQSFLAVGRRGKYLLLSCTQGTIILHLGMSGSLRLVTTNTPHGKHDHLDIVLNNGRCLRFNDPRRFGSVSWTQANPLHHPLLEILGPEPLESLFDGHYLFKHSRHRRTSVKAFIMNHRIVAGVGNIYANEALFLAGIHPRRSASRIGLARYQRLAETTKTVLYNAIQAGGTTLRNFLTSDGKPGYFANQLQIYGRSAHPCPICGTPIRLERIGQRASYYCTQCQH</sequence>
<gene>
    <name evidence="2" type="primary">mutM</name>
    <name evidence="2" type="synonym">fpg</name>
    <name type="ordered locus">Noc_2648</name>
</gene>
<accession>Q3J7U5</accession>
<protein>
    <recommendedName>
        <fullName evidence="2">Formamidopyrimidine-DNA glycosylase</fullName>
        <shortName evidence="2">Fapy-DNA glycosylase</shortName>
        <ecNumber evidence="2">3.2.2.23</ecNumber>
    </recommendedName>
    <alternativeName>
        <fullName evidence="2">DNA-(apurinic or apyrimidinic site) lyase MutM</fullName>
        <shortName evidence="2">AP lyase MutM</shortName>
        <ecNumber evidence="2">4.2.99.18</ecNumber>
    </alternativeName>
</protein>
<name>FPG_NITOC</name>